<feature type="chain" id="PRO_0000333522" description="GDP-mannose transporter 1">
    <location>
        <begin position="1"/>
        <end position="379"/>
    </location>
</feature>
<feature type="topological domain" description="Cytoplasmic" evidence="1">
    <location>
        <begin position="1"/>
        <end position="39"/>
    </location>
</feature>
<feature type="transmembrane region" description="Helical" evidence="2">
    <location>
        <begin position="40"/>
        <end position="60"/>
    </location>
</feature>
<feature type="topological domain" description="Lumenal" evidence="1">
    <location>
        <begin position="61"/>
        <end position="69"/>
    </location>
</feature>
<feature type="transmembrane region" description="Helical" evidence="2">
    <location>
        <begin position="70"/>
        <end position="90"/>
    </location>
</feature>
<feature type="topological domain" description="Cytoplasmic" evidence="1">
    <location>
        <begin position="91"/>
        <end position="110"/>
    </location>
</feature>
<feature type="transmembrane region" description="Helical" evidence="2">
    <location>
        <begin position="111"/>
        <end position="133"/>
    </location>
</feature>
<feature type="topological domain" description="Lumenal" evidence="1">
    <location>
        <begin position="134"/>
        <end position="136"/>
    </location>
</feature>
<feature type="transmembrane region" description="Helical" evidence="2">
    <location>
        <begin position="137"/>
        <end position="156"/>
    </location>
</feature>
<feature type="topological domain" description="Cytoplasmic" evidence="1">
    <location>
        <begin position="157"/>
        <end position="162"/>
    </location>
</feature>
<feature type="transmembrane region" description="Helical" evidence="2">
    <location>
        <begin position="163"/>
        <end position="182"/>
    </location>
</feature>
<feature type="topological domain" description="Lumenal" evidence="1">
    <location>
        <begin position="183"/>
        <end position="198"/>
    </location>
</feature>
<feature type="transmembrane region" description="Helical" evidence="2">
    <location>
        <begin position="199"/>
        <end position="219"/>
    </location>
</feature>
<feature type="topological domain" description="Cytoplasmic" evidence="1">
    <location>
        <begin position="220"/>
        <end position="233"/>
    </location>
</feature>
<feature type="transmembrane region" description="Helical" evidence="2">
    <location>
        <begin position="234"/>
        <end position="254"/>
    </location>
</feature>
<feature type="topological domain" description="Lumenal" evidence="1">
    <location>
        <begin position="255"/>
        <end position="272"/>
    </location>
</feature>
<feature type="transmembrane region" description="Helical" evidence="2">
    <location>
        <begin position="273"/>
        <end position="293"/>
    </location>
</feature>
<feature type="topological domain" description="Cytoplasmic" evidence="1">
    <location>
        <begin position="294"/>
        <end position="301"/>
    </location>
</feature>
<feature type="transmembrane region" description="Helical" evidence="2">
    <location>
        <begin position="302"/>
        <end position="322"/>
    </location>
</feature>
<feature type="topological domain" description="Lumenal" evidence="1">
    <location>
        <begin position="323"/>
        <end position="325"/>
    </location>
</feature>
<feature type="transmembrane region" description="Helical" evidence="2">
    <location>
        <begin position="326"/>
        <end position="346"/>
    </location>
</feature>
<feature type="topological domain" description="Cytoplasmic" evidence="1">
    <location>
        <begin position="347"/>
        <end position="379"/>
    </location>
</feature>
<feature type="region of interest" description="Disordered" evidence="3">
    <location>
        <begin position="17"/>
        <end position="38"/>
    </location>
</feature>
<comment type="function">
    <text evidence="1">Involved in the import of GDP-mannose from the cytoplasm into the Golgi lumen.</text>
</comment>
<comment type="subunit">
    <text evidence="1">Homooligomer.</text>
</comment>
<comment type="subcellular location">
    <subcellularLocation>
        <location evidence="1">Golgi apparatus membrane</location>
        <topology evidence="1">Multi-pass membrane protein</topology>
    </subcellularLocation>
    <subcellularLocation>
        <location evidence="1">Cytoplasmic vesicle membrane</location>
        <topology evidence="1">Multi-pass membrane protein</topology>
    </subcellularLocation>
    <subcellularLocation>
        <location evidence="1">Endoplasmic reticulum membrane</location>
        <topology evidence="1">Multi-pass membrane protein</topology>
    </subcellularLocation>
</comment>
<comment type="similarity">
    <text evidence="4">Belongs to the TPT transporter family. SLC35D subfamily.</text>
</comment>
<comment type="sequence caution" evidence="4">
    <conflict type="erroneous initiation">
        <sequence resource="EMBL-CDS" id="EAA60136"/>
    </conflict>
</comment>
<sequence length="379" mass="41519">MTDNRKPEDYTIEMDKLGQNKNYQAPPPPPQPRSSTASSISNNAALSVLAYCGSSILMTVMNKYVLSSDFNLNFFLLCVQSLVCIIAIQLCKACGLITYRDFNLDEARKWFPITLLLIGMIYTGSKALQFLSIPVYTIFKNLTIILIAYGEVLWFGGSVTNLTLFSFGLMVFSSIIAAWADIKHAIESSGDATSKVSTLNAGYIWMLINCLCTSSYVLGMRKRIKLTNFKDFDTMFYNNLLSIPVLIVCSGILEDWSPANVARNFPSADRNGIMFAMILSGLSTVFISYTSAWCVRVTSSTTYSMVGALNKLPIALSGLIFFDAPVTFPSVSAIMVGFVSGIVYAVAKIKQNAKPKVGILPTTNPVSASSQSMRDSLRS</sequence>
<evidence type="ECO:0000250" key="1"/>
<evidence type="ECO:0000255" key="2"/>
<evidence type="ECO:0000256" key="3">
    <source>
        <dbReference type="SAM" id="MobiDB-lite"/>
    </source>
</evidence>
<evidence type="ECO:0000305" key="4"/>
<protein>
    <recommendedName>
        <fullName>GDP-mannose transporter 1</fullName>
        <shortName>GMT 1</shortName>
    </recommendedName>
</protein>
<organism>
    <name type="scientific">Emericella nidulans (strain FGSC A4 / ATCC 38163 / CBS 112.46 / NRRL 194 / M139)</name>
    <name type="common">Aspergillus nidulans</name>
    <dbReference type="NCBI Taxonomy" id="227321"/>
    <lineage>
        <taxon>Eukaryota</taxon>
        <taxon>Fungi</taxon>
        <taxon>Dikarya</taxon>
        <taxon>Ascomycota</taxon>
        <taxon>Pezizomycotina</taxon>
        <taxon>Eurotiomycetes</taxon>
        <taxon>Eurotiomycetidae</taxon>
        <taxon>Eurotiales</taxon>
        <taxon>Aspergillaceae</taxon>
        <taxon>Aspergillus</taxon>
        <taxon>Aspergillus subgen. Nidulantes</taxon>
    </lineage>
</organism>
<reference key="1">
    <citation type="journal article" date="2005" name="Nature">
        <title>Sequencing of Aspergillus nidulans and comparative analysis with A. fumigatus and A. oryzae.</title>
        <authorList>
            <person name="Galagan J.E."/>
            <person name="Calvo S.E."/>
            <person name="Cuomo C."/>
            <person name="Ma L.-J."/>
            <person name="Wortman J.R."/>
            <person name="Batzoglou S."/>
            <person name="Lee S.-I."/>
            <person name="Bastuerkmen M."/>
            <person name="Spevak C.C."/>
            <person name="Clutterbuck J."/>
            <person name="Kapitonov V."/>
            <person name="Jurka J."/>
            <person name="Scazzocchio C."/>
            <person name="Farman M.L."/>
            <person name="Butler J."/>
            <person name="Purcell S."/>
            <person name="Harris S."/>
            <person name="Braus G.H."/>
            <person name="Draht O."/>
            <person name="Busch S."/>
            <person name="D'Enfert C."/>
            <person name="Bouchier C."/>
            <person name="Goldman G.H."/>
            <person name="Bell-Pedersen D."/>
            <person name="Griffiths-Jones S."/>
            <person name="Doonan J.H."/>
            <person name="Yu J."/>
            <person name="Vienken K."/>
            <person name="Pain A."/>
            <person name="Freitag M."/>
            <person name="Selker E.U."/>
            <person name="Archer D.B."/>
            <person name="Penalva M.A."/>
            <person name="Oakley B.R."/>
            <person name="Momany M."/>
            <person name="Tanaka T."/>
            <person name="Kumagai T."/>
            <person name="Asai K."/>
            <person name="Machida M."/>
            <person name="Nierman W.C."/>
            <person name="Denning D.W."/>
            <person name="Caddick M.X."/>
            <person name="Hynes M."/>
            <person name="Paoletti M."/>
            <person name="Fischer R."/>
            <person name="Miller B.L."/>
            <person name="Dyer P.S."/>
            <person name="Sachs M.S."/>
            <person name="Osmani S.A."/>
            <person name="Birren B.W."/>
        </authorList>
    </citation>
    <scope>NUCLEOTIDE SEQUENCE [LARGE SCALE GENOMIC DNA]</scope>
    <source>
        <strain>FGSC A4 / ATCC 38163 / CBS 112.46 / NRRL 194 / M139</strain>
    </source>
</reference>
<reference key="2">
    <citation type="journal article" date="2009" name="Fungal Genet. Biol.">
        <title>The 2008 update of the Aspergillus nidulans genome annotation: a community effort.</title>
        <authorList>
            <person name="Wortman J.R."/>
            <person name="Gilsenan J.M."/>
            <person name="Joardar V."/>
            <person name="Deegan J."/>
            <person name="Clutterbuck J."/>
            <person name="Andersen M.R."/>
            <person name="Archer D."/>
            <person name="Bencina M."/>
            <person name="Braus G."/>
            <person name="Coutinho P."/>
            <person name="von Dohren H."/>
            <person name="Doonan J."/>
            <person name="Driessen A.J."/>
            <person name="Durek P."/>
            <person name="Espeso E."/>
            <person name="Fekete E."/>
            <person name="Flipphi M."/>
            <person name="Estrada C.G."/>
            <person name="Geysens S."/>
            <person name="Goldman G."/>
            <person name="de Groot P.W."/>
            <person name="Hansen K."/>
            <person name="Harris S.D."/>
            <person name="Heinekamp T."/>
            <person name="Helmstaedt K."/>
            <person name="Henrissat B."/>
            <person name="Hofmann G."/>
            <person name="Homan T."/>
            <person name="Horio T."/>
            <person name="Horiuchi H."/>
            <person name="James S."/>
            <person name="Jones M."/>
            <person name="Karaffa L."/>
            <person name="Karanyi Z."/>
            <person name="Kato M."/>
            <person name="Keller N."/>
            <person name="Kelly D.E."/>
            <person name="Kiel J.A."/>
            <person name="Kim J.M."/>
            <person name="van der Klei I.J."/>
            <person name="Klis F.M."/>
            <person name="Kovalchuk A."/>
            <person name="Krasevec N."/>
            <person name="Kubicek C.P."/>
            <person name="Liu B."/>
            <person name="Maccabe A."/>
            <person name="Meyer V."/>
            <person name="Mirabito P."/>
            <person name="Miskei M."/>
            <person name="Mos M."/>
            <person name="Mullins J."/>
            <person name="Nelson D.R."/>
            <person name="Nielsen J."/>
            <person name="Oakley B.R."/>
            <person name="Osmani S.A."/>
            <person name="Pakula T."/>
            <person name="Paszewski A."/>
            <person name="Paulsen I."/>
            <person name="Pilsyk S."/>
            <person name="Pocsi I."/>
            <person name="Punt P.J."/>
            <person name="Ram A.F."/>
            <person name="Ren Q."/>
            <person name="Robellet X."/>
            <person name="Robson G."/>
            <person name="Seiboth B."/>
            <person name="van Solingen P."/>
            <person name="Specht T."/>
            <person name="Sun J."/>
            <person name="Taheri-Talesh N."/>
            <person name="Takeshita N."/>
            <person name="Ussery D."/>
            <person name="vanKuyk P.A."/>
            <person name="Visser H."/>
            <person name="van de Vondervoort P.J."/>
            <person name="de Vries R.P."/>
            <person name="Walton J."/>
            <person name="Xiang X."/>
            <person name="Xiong Y."/>
            <person name="Zeng A.P."/>
            <person name="Brandt B.W."/>
            <person name="Cornell M.J."/>
            <person name="van den Hondel C.A."/>
            <person name="Visser J."/>
            <person name="Oliver S.G."/>
            <person name="Turner G."/>
        </authorList>
    </citation>
    <scope>GENOME REANNOTATION</scope>
    <source>
        <strain>FGSC A4 / ATCC 38163 / CBS 112.46 / NRRL 194 / M139</strain>
    </source>
</reference>
<accession>Q5AS82</accession>
<accession>C8V9I1</accession>
<dbReference type="EMBL" id="AACD01000163">
    <property type="protein sequence ID" value="EAA60136.1"/>
    <property type="status" value="ALT_INIT"/>
    <property type="molecule type" value="Genomic_DNA"/>
</dbReference>
<dbReference type="EMBL" id="BN001303">
    <property type="protein sequence ID" value="CBF77888.1"/>
    <property type="molecule type" value="Genomic_DNA"/>
</dbReference>
<dbReference type="RefSeq" id="XP_682117.1">
    <property type="nucleotide sequence ID" value="XM_677025.1"/>
</dbReference>
<dbReference type="SMR" id="Q5AS82"/>
<dbReference type="FunCoup" id="Q5AS82">
    <property type="interactions" value="532"/>
</dbReference>
<dbReference type="STRING" id="227321.Q5AS82"/>
<dbReference type="EnsemblFungi" id="CBF77888">
    <property type="protein sequence ID" value="CBF77888"/>
    <property type="gene ID" value="ANIA_08848"/>
</dbReference>
<dbReference type="KEGG" id="ani:ANIA_08848"/>
<dbReference type="VEuPathDB" id="FungiDB:AN8848"/>
<dbReference type="eggNOG" id="KOG1444">
    <property type="taxonomic scope" value="Eukaryota"/>
</dbReference>
<dbReference type="HOGENOM" id="CLU_025360_1_2_1"/>
<dbReference type="InParanoid" id="Q5AS82"/>
<dbReference type="OMA" id="KLIRVWI"/>
<dbReference type="OrthoDB" id="417037at2759"/>
<dbReference type="Proteomes" id="UP000000560">
    <property type="component" value="Chromosome III"/>
</dbReference>
<dbReference type="GO" id="GO:0030659">
    <property type="term" value="C:cytoplasmic vesicle membrane"/>
    <property type="evidence" value="ECO:0007669"/>
    <property type="project" value="UniProtKB-SubCell"/>
</dbReference>
<dbReference type="GO" id="GO:0005789">
    <property type="term" value="C:endoplasmic reticulum membrane"/>
    <property type="evidence" value="ECO:0007669"/>
    <property type="project" value="UniProtKB-SubCell"/>
</dbReference>
<dbReference type="GO" id="GO:0005794">
    <property type="term" value="C:Golgi apparatus"/>
    <property type="evidence" value="ECO:0000318"/>
    <property type="project" value="GO_Central"/>
</dbReference>
<dbReference type="GO" id="GO:0000139">
    <property type="term" value="C:Golgi membrane"/>
    <property type="evidence" value="ECO:0007669"/>
    <property type="project" value="UniProtKB-SubCell"/>
</dbReference>
<dbReference type="GO" id="GO:0015297">
    <property type="term" value="F:antiporter activity"/>
    <property type="evidence" value="ECO:0000318"/>
    <property type="project" value="GO_Central"/>
</dbReference>
<dbReference type="GO" id="GO:0005458">
    <property type="term" value="F:GDP-mannose transmembrane transporter activity"/>
    <property type="evidence" value="ECO:0000318"/>
    <property type="project" value="GO_Central"/>
</dbReference>
<dbReference type="GO" id="GO:0007163">
    <property type="term" value="P:establishment or maintenance of cell polarity"/>
    <property type="evidence" value="ECO:0000315"/>
    <property type="project" value="AspGD"/>
</dbReference>
<dbReference type="GO" id="GO:1990570">
    <property type="term" value="P:GDP-mannose transmembrane transport"/>
    <property type="evidence" value="ECO:0000318"/>
    <property type="project" value="GO_Central"/>
</dbReference>
<dbReference type="InterPro" id="IPR013657">
    <property type="entry name" value="SCL35B1-4/HUT1"/>
</dbReference>
<dbReference type="InterPro" id="IPR050186">
    <property type="entry name" value="TPT_transporter"/>
</dbReference>
<dbReference type="NCBIfam" id="TIGR00803">
    <property type="entry name" value="nst"/>
    <property type="match status" value="1"/>
</dbReference>
<dbReference type="PANTHER" id="PTHR11132">
    <property type="entry name" value="SOLUTE CARRIER FAMILY 35"/>
    <property type="match status" value="1"/>
</dbReference>
<dbReference type="Pfam" id="PF08449">
    <property type="entry name" value="UAA"/>
    <property type="match status" value="1"/>
</dbReference>
<dbReference type="SUPFAM" id="SSF103481">
    <property type="entry name" value="Multidrug resistance efflux transporter EmrE"/>
    <property type="match status" value="1"/>
</dbReference>
<proteinExistence type="inferred from homology"/>
<keyword id="KW-0968">Cytoplasmic vesicle</keyword>
<keyword id="KW-0256">Endoplasmic reticulum</keyword>
<keyword id="KW-0333">Golgi apparatus</keyword>
<keyword id="KW-0472">Membrane</keyword>
<keyword id="KW-1185">Reference proteome</keyword>
<keyword id="KW-0762">Sugar transport</keyword>
<keyword id="KW-0812">Transmembrane</keyword>
<keyword id="KW-1133">Transmembrane helix</keyword>
<keyword id="KW-0813">Transport</keyword>
<name>GMT1_EMENI</name>
<gene>
    <name type="primary">gmt1</name>
    <name type="synonym">vrg4-1</name>
    <name type="ORF">AN8848</name>
</gene>